<comment type="function">
    <text evidence="1">Exhibits a very high intrinsic GTPase hydrolysis rate. Involved in the addition of a carboxymethylaminomethyl (cmnm) group at the wobble position (U34) of certain tRNAs, forming tRNA-cmnm(5)s(2)U34.</text>
</comment>
<comment type="cofactor">
    <cofactor evidence="1">
        <name>K(+)</name>
        <dbReference type="ChEBI" id="CHEBI:29103"/>
    </cofactor>
    <text evidence="1">Binds 1 potassium ion per subunit.</text>
</comment>
<comment type="subunit">
    <text evidence="1">Homodimer. Heterotetramer of two MnmE and two MnmG subunits.</text>
</comment>
<comment type="subcellular location">
    <subcellularLocation>
        <location evidence="1">Cytoplasm</location>
    </subcellularLocation>
</comment>
<comment type="similarity">
    <text evidence="1">Belongs to the TRAFAC class TrmE-Era-EngA-EngB-Septin-like GTPase superfamily. TrmE GTPase family.</text>
</comment>
<sequence>MSKFFERDDDIVALATPFLSSALCVIRSSGASSISKFSKIFSNHSALNSASGNTIHYGYILDSENGCKVDEVVVCLYRAPKSFTGQDAIEVMAHGSVIGIKKIIDLFLKSGFRMAEPGEFTLRAFLAKKIDLTKAEAIHEIIFAKTNKTYSLAVNKLSGALFVKIDAIKKSILNFLSAVSVYLDYEVDDHEISIPFDLILSSKAELKKLINSYKVYEKIDNGVALVLAGSVNAGKSSLFNLFLKKDRSIVSSYPGTTRDYIEASFELDGILFNLFDTAGLRDADNFVERLGIEKSNSLIKEASLVIYVIDVSSNLTKDDFLFIDSNKSNSKILFVLNKIDLKINKSTEEFVRSKVLNSSNLIMISTKNLEGIDILYDKIRALISYERVEIGLDDIIISSNRQMQLLEKAYALILDLLSKIDRQVSYDMLAFDAYEIINCLGEITGEVSSEDVLDNMFKNFCLGK</sequence>
<keyword id="KW-0963">Cytoplasm</keyword>
<keyword id="KW-0342">GTP-binding</keyword>
<keyword id="KW-0378">Hydrolase</keyword>
<keyword id="KW-0460">Magnesium</keyword>
<keyword id="KW-0479">Metal-binding</keyword>
<keyword id="KW-0547">Nucleotide-binding</keyword>
<keyword id="KW-0630">Potassium</keyword>
<keyword id="KW-1185">Reference proteome</keyword>
<keyword id="KW-0819">tRNA processing</keyword>
<gene>
    <name evidence="1" type="primary">mnmE</name>
    <name evidence="1" type="synonym">thdF</name>
    <name evidence="1" type="synonym">trmE</name>
    <name type="ordered locus">BB_0179</name>
</gene>
<accession>P53364</accession>
<accession>O51198</accession>
<evidence type="ECO:0000255" key="1">
    <source>
        <dbReference type="HAMAP-Rule" id="MF_00379"/>
    </source>
</evidence>
<evidence type="ECO:0000305" key="2"/>
<protein>
    <recommendedName>
        <fullName evidence="1">tRNA modification GTPase MnmE</fullName>
        <ecNumber evidence="1">3.6.-.-</ecNumber>
    </recommendedName>
</protein>
<feature type="chain" id="PRO_0000188853" description="tRNA modification GTPase MnmE">
    <location>
        <begin position="1"/>
        <end position="464"/>
    </location>
</feature>
<feature type="domain" description="TrmE-type G">
    <location>
        <begin position="222"/>
        <end position="384"/>
    </location>
</feature>
<feature type="binding site" evidence="1">
    <location>
        <position position="27"/>
    </location>
    <ligand>
        <name>(6S)-5-formyl-5,6,7,8-tetrahydrofolate</name>
        <dbReference type="ChEBI" id="CHEBI:57457"/>
    </ligand>
</feature>
<feature type="binding site" evidence="1">
    <location>
        <position position="90"/>
    </location>
    <ligand>
        <name>(6S)-5-formyl-5,6,7,8-tetrahydrofolate</name>
        <dbReference type="ChEBI" id="CHEBI:57457"/>
    </ligand>
</feature>
<feature type="binding site" evidence="1">
    <location>
        <position position="129"/>
    </location>
    <ligand>
        <name>(6S)-5-formyl-5,6,7,8-tetrahydrofolate</name>
        <dbReference type="ChEBI" id="CHEBI:57457"/>
    </ligand>
</feature>
<feature type="binding site" evidence="1">
    <location>
        <begin position="232"/>
        <end position="237"/>
    </location>
    <ligand>
        <name>GTP</name>
        <dbReference type="ChEBI" id="CHEBI:37565"/>
    </ligand>
</feature>
<feature type="binding site" evidence="1">
    <location>
        <position position="236"/>
    </location>
    <ligand>
        <name>Mg(2+)</name>
        <dbReference type="ChEBI" id="CHEBI:18420"/>
    </ligand>
</feature>
<feature type="binding site" evidence="1">
    <location>
        <begin position="251"/>
        <end position="257"/>
    </location>
    <ligand>
        <name>GTP</name>
        <dbReference type="ChEBI" id="CHEBI:37565"/>
    </ligand>
</feature>
<feature type="binding site" evidence="1">
    <location>
        <position position="257"/>
    </location>
    <ligand>
        <name>Mg(2+)</name>
        <dbReference type="ChEBI" id="CHEBI:18420"/>
    </ligand>
</feature>
<feature type="binding site" evidence="1">
    <location>
        <begin position="276"/>
        <end position="279"/>
    </location>
    <ligand>
        <name>GTP</name>
        <dbReference type="ChEBI" id="CHEBI:37565"/>
    </ligand>
</feature>
<feature type="binding site" evidence="1">
    <location>
        <position position="464"/>
    </location>
    <ligand>
        <name>(6S)-5-formyl-5,6,7,8-tetrahydrofolate</name>
        <dbReference type="ChEBI" id="CHEBI:57457"/>
    </ligand>
</feature>
<feature type="sequence conflict" description="In Ref. 1; CAA06004/CAA64971 and 3; AAB62738." evidence="2" ref="1 3">
    <location>
        <position position="78"/>
    </location>
</feature>
<organism>
    <name type="scientific">Borreliella burgdorferi (strain ATCC 35210 / DSM 4680 / CIP 102532 / B31)</name>
    <name type="common">Borrelia burgdorferi</name>
    <dbReference type="NCBI Taxonomy" id="224326"/>
    <lineage>
        <taxon>Bacteria</taxon>
        <taxon>Pseudomonadati</taxon>
        <taxon>Spirochaetota</taxon>
        <taxon>Spirochaetia</taxon>
        <taxon>Spirochaetales</taxon>
        <taxon>Borreliaceae</taxon>
        <taxon>Borreliella</taxon>
    </lineage>
</organism>
<dbReference type="EC" id="3.6.-.-" evidence="1"/>
<dbReference type="EMBL" id="AJ003222">
    <property type="protein sequence ID" value="CAA06004.1"/>
    <property type="molecule type" value="Genomic_DNA"/>
</dbReference>
<dbReference type="EMBL" id="X95669">
    <property type="protein sequence ID" value="CAA64971.1"/>
    <property type="molecule type" value="Genomic_DNA"/>
</dbReference>
<dbReference type="EMBL" id="AE000783">
    <property type="protein sequence ID" value="AAC66556.1"/>
    <property type="molecule type" value="Genomic_DNA"/>
</dbReference>
<dbReference type="EMBL" id="U62901">
    <property type="protein sequence ID" value="AAB62738.1"/>
    <property type="molecule type" value="Genomic_DNA"/>
</dbReference>
<dbReference type="EMBL" id="Z12160">
    <property type="protein sequence ID" value="CAA78148.1"/>
    <property type="molecule type" value="Genomic_DNA"/>
</dbReference>
<dbReference type="PIR" id="C70122">
    <property type="entry name" value="C70122"/>
</dbReference>
<dbReference type="RefSeq" id="NP_212313.1">
    <property type="nucleotide sequence ID" value="NC_001318.1"/>
</dbReference>
<dbReference type="RefSeq" id="WP_002656499.1">
    <property type="nucleotide sequence ID" value="NC_001318.1"/>
</dbReference>
<dbReference type="SMR" id="P53364"/>
<dbReference type="STRING" id="224326.BB_0179"/>
<dbReference type="PaxDb" id="224326-BB_0179"/>
<dbReference type="EnsemblBacteria" id="AAC66556">
    <property type="protein sequence ID" value="AAC66556"/>
    <property type="gene ID" value="BB_0179"/>
</dbReference>
<dbReference type="GeneID" id="56567606"/>
<dbReference type="KEGG" id="bbu:BB_0179"/>
<dbReference type="PATRIC" id="fig|224326.49.peg.576"/>
<dbReference type="HOGENOM" id="CLU_019624_4_1_12"/>
<dbReference type="OrthoDB" id="9805918at2"/>
<dbReference type="Proteomes" id="UP000001807">
    <property type="component" value="Chromosome"/>
</dbReference>
<dbReference type="GO" id="GO:0005829">
    <property type="term" value="C:cytosol"/>
    <property type="evidence" value="ECO:0007669"/>
    <property type="project" value="TreeGrafter"/>
</dbReference>
<dbReference type="GO" id="GO:0005525">
    <property type="term" value="F:GTP binding"/>
    <property type="evidence" value="ECO:0007669"/>
    <property type="project" value="UniProtKB-UniRule"/>
</dbReference>
<dbReference type="GO" id="GO:0003924">
    <property type="term" value="F:GTPase activity"/>
    <property type="evidence" value="ECO:0007669"/>
    <property type="project" value="UniProtKB-UniRule"/>
</dbReference>
<dbReference type="GO" id="GO:0046872">
    <property type="term" value="F:metal ion binding"/>
    <property type="evidence" value="ECO:0007669"/>
    <property type="project" value="UniProtKB-KW"/>
</dbReference>
<dbReference type="GO" id="GO:0030488">
    <property type="term" value="P:tRNA methylation"/>
    <property type="evidence" value="ECO:0007669"/>
    <property type="project" value="TreeGrafter"/>
</dbReference>
<dbReference type="GO" id="GO:0002098">
    <property type="term" value="P:tRNA wobble uridine modification"/>
    <property type="evidence" value="ECO:0007669"/>
    <property type="project" value="TreeGrafter"/>
</dbReference>
<dbReference type="CDD" id="cd04164">
    <property type="entry name" value="trmE"/>
    <property type="match status" value="1"/>
</dbReference>
<dbReference type="CDD" id="cd14858">
    <property type="entry name" value="TrmE_N"/>
    <property type="match status" value="1"/>
</dbReference>
<dbReference type="Gene3D" id="3.40.50.300">
    <property type="entry name" value="P-loop containing nucleotide triphosphate hydrolases"/>
    <property type="match status" value="1"/>
</dbReference>
<dbReference type="Gene3D" id="3.30.1360.120">
    <property type="entry name" value="Probable tRNA modification gtpase trme, domain 1"/>
    <property type="match status" value="1"/>
</dbReference>
<dbReference type="Gene3D" id="1.20.120.430">
    <property type="entry name" value="tRNA modification GTPase MnmE domain 2"/>
    <property type="match status" value="1"/>
</dbReference>
<dbReference type="HAMAP" id="MF_00379">
    <property type="entry name" value="GTPase_MnmE"/>
    <property type="match status" value="1"/>
</dbReference>
<dbReference type="InterPro" id="IPR031168">
    <property type="entry name" value="G_TrmE"/>
</dbReference>
<dbReference type="InterPro" id="IPR006073">
    <property type="entry name" value="GTP-bd"/>
</dbReference>
<dbReference type="InterPro" id="IPR018948">
    <property type="entry name" value="GTP-bd_TrmE_N"/>
</dbReference>
<dbReference type="InterPro" id="IPR004520">
    <property type="entry name" value="GTPase_MnmE"/>
</dbReference>
<dbReference type="InterPro" id="IPR027368">
    <property type="entry name" value="MnmE_dom2"/>
</dbReference>
<dbReference type="InterPro" id="IPR025867">
    <property type="entry name" value="MnmE_helical"/>
</dbReference>
<dbReference type="InterPro" id="IPR027417">
    <property type="entry name" value="P-loop_NTPase"/>
</dbReference>
<dbReference type="InterPro" id="IPR005225">
    <property type="entry name" value="Small_GTP-bd"/>
</dbReference>
<dbReference type="InterPro" id="IPR027266">
    <property type="entry name" value="TrmE/GcvT_dom1"/>
</dbReference>
<dbReference type="NCBIfam" id="TIGR00450">
    <property type="entry name" value="mnmE_trmE_thdF"/>
    <property type="match status" value="1"/>
</dbReference>
<dbReference type="NCBIfam" id="TIGR00231">
    <property type="entry name" value="small_GTP"/>
    <property type="match status" value="1"/>
</dbReference>
<dbReference type="PANTHER" id="PTHR42714">
    <property type="entry name" value="TRNA MODIFICATION GTPASE GTPBP3"/>
    <property type="match status" value="1"/>
</dbReference>
<dbReference type="PANTHER" id="PTHR42714:SF2">
    <property type="entry name" value="TRNA MODIFICATION GTPASE GTPBP3, MITOCHONDRIAL"/>
    <property type="match status" value="1"/>
</dbReference>
<dbReference type="Pfam" id="PF01926">
    <property type="entry name" value="MMR_HSR1"/>
    <property type="match status" value="1"/>
</dbReference>
<dbReference type="Pfam" id="PF12631">
    <property type="entry name" value="MnmE_helical"/>
    <property type="match status" value="1"/>
</dbReference>
<dbReference type="Pfam" id="PF10396">
    <property type="entry name" value="TrmE_N"/>
    <property type="match status" value="1"/>
</dbReference>
<dbReference type="SUPFAM" id="SSF52540">
    <property type="entry name" value="P-loop containing nucleoside triphosphate hydrolases"/>
    <property type="match status" value="1"/>
</dbReference>
<dbReference type="PROSITE" id="PS51709">
    <property type="entry name" value="G_TRME"/>
    <property type="match status" value="1"/>
</dbReference>
<name>MNME_BORBU</name>
<reference key="1">
    <citation type="submission" date="1996-02" db="EMBL/GenBank/DDBJ databases">
        <authorList>
            <person name="Old I.G."/>
        </authorList>
    </citation>
    <scope>NUCLEOTIDE SEQUENCE [GENOMIC DNA]</scope>
    <source>
        <strain>212</strain>
    </source>
</reference>
<reference key="2">
    <citation type="journal article" date="1997" name="Nature">
        <title>Genomic sequence of a Lyme disease spirochaete, Borrelia burgdorferi.</title>
        <authorList>
            <person name="Fraser C.M."/>
            <person name="Casjens S."/>
            <person name="Huang W.M."/>
            <person name="Sutton G.G."/>
            <person name="Clayton R.A."/>
            <person name="Lathigra R."/>
            <person name="White O."/>
            <person name="Ketchum K.A."/>
            <person name="Dodson R.J."/>
            <person name="Hickey E.K."/>
            <person name="Gwinn M.L."/>
            <person name="Dougherty B.A."/>
            <person name="Tomb J.-F."/>
            <person name="Fleischmann R.D."/>
            <person name="Richardson D.L."/>
            <person name="Peterson J.D."/>
            <person name="Kerlavage A.R."/>
            <person name="Quackenbush J."/>
            <person name="Salzberg S.L."/>
            <person name="Hanson M."/>
            <person name="van Vugt R."/>
            <person name="Palmer N."/>
            <person name="Adams M.D."/>
            <person name="Gocayne J.D."/>
            <person name="Weidman J.F."/>
            <person name="Utterback T.R."/>
            <person name="Watthey L."/>
            <person name="McDonald L.A."/>
            <person name="Artiach P."/>
            <person name="Bowman C."/>
            <person name="Garland S.A."/>
            <person name="Fujii C."/>
            <person name="Cotton M.D."/>
            <person name="Horst K."/>
            <person name="Roberts K.M."/>
            <person name="Hatch B."/>
            <person name="Smith H.O."/>
            <person name="Venter J.C."/>
        </authorList>
    </citation>
    <scope>NUCLEOTIDE SEQUENCE [LARGE SCALE GENOMIC DNA]</scope>
    <source>
        <strain>ATCC 35210 / DSM 4680 / CIP 102532 / B31</strain>
    </source>
</reference>
<reference key="3">
    <citation type="submission" date="1996-09" db="EMBL/GenBank/DDBJ databases">
        <authorList>
            <person name="Ge Y."/>
            <person name="Old I.G."/>
            <person name="Saint-Girons I."/>
            <person name="Charon N.W."/>
        </authorList>
    </citation>
    <scope>NUCLEOTIDE SEQUENCE [GENOMIC DNA] OF 1-141</scope>
    <source>
        <strain>212</strain>
    </source>
</reference>
<reference key="4">
    <citation type="journal article" date="1992" name="FEMS Microbiol. Lett.">
        <title>Mapping of genes on the linear chromosome of the bacterium Borrelia burgdorferi: possible locations for its origin of replication.</title>
        <authorList>
            <person name="Old I.G."/>
            <person name="Macdougall J.H."/>
            <person name="Saint-Girons I."/>
            <person name="Davidson B.E."/>
        </authorList>
    </citation>
    <scope>NUCLEOTIDE SEQUENCE [GENOMIC DNA] OF 430-464</scope>
    <source>
        <strain>212</strain>
    </source>
</reference>
<proteinExistence type="inferred from homology"/>